<organism evidence="4">
    <name type="scientific">Amolops chunganensis</name>
    <name type="common">Chungan torrent frog</name>
    <name type="synonym">Hylorana chunganensis</name>
    <dbReference type="NCBI Taxonomy" id="325556"/>
    <lineage>
        <taxon>Eukaryota</taxon>
        <taxon>Metazoa</taxon>
        <taxon>Chordata</taxon>
        <taxon>Craniata</taxon>
        <taxon>Vertebrata</taxon>
        <taxon>Euteleostomi</taxon>
        <taxon>Amphibia</taxon>
        <taxon>Batrachia</taxon>
        <taxon>Anura</taxon>
        <taxon>Neobatrachia</taxon>
        <taxon>Ranoidea</taxon>
        <taxon>Ranidae</taxon>
        <taxon>Amolops</taxon>
    </lineage>
</organism>
<accession>E1B228</accession>
<feature type="signal peptide" evidence="2">
    <location>
        <begin position="1"/>
        <end position="22"/>
    </location>
</feature>
<feature type="propeptide" id="PRO_0000439732" description="Removed in mature form" evidence="5">
    <location>
        <begin position="23"/>
        <end position="43"/>
    </location>
</feature>
<feature type="peptide" id="PRO_0000439733" description="Brevinin-1CG5" evidence="4">
    <location>
        <begin position="46"/>
        <end position="69"/>
    </location>
</feature>
<feature type="disulfide bond" evidence="1">
    <location>
        <begin position="63"/>
        <end position="69"/>
    </location>
</feature>
<dbReference type="EMBL" id="HQ128603">
    <property type="protein sequence ID" value="ADM34261.1"/>
    <property type="molecule type" value="mRNA"/>
</dbReference>
<dbReference type="GO" id="GO:0005576">
    <property type="term" value="C:extracellular region"/>
    <property type="evidence" value="ECO:0007669"/>
    <property type="project" value="UniProtKB-SubCell"/>
</dbReference>
<dbReference type="GO" id="GO:0042742">
    <property type="term" value="P:defense response to bacterium"/>
    <property type="evidence" value="ECO:0007669"/>
    <property type="project" value="UniProtKB-KW"/>
</dbReference>
<dbReference type="GO" id="GO:0050832">
    <property type="term" value="P:defense response to fungus"/>
    <property type="evidence" value="ECO:0007669"/>
    <property type="project" value="UniProtKB-KW"/>
</dbReference>
<dbReference type="GO" id="GO:0031640">
    <property type="term" value="P:killing of cells of another organism"/>
    <property type="evidence" value="ECO:0007669"/>
    <property type="project" value="UniProtKB-KW"/>
</dbReference>
<dbReference type="InterPro" id="IPR012520">
    <property type="entry name" value="Antimicrobial_frog_1"/>
</dbReference>
<dbReference type="InterPro" id="IPR004275">
    <property type="entry name" value="Frog_antimicrobial_propeptide"/>
</dbReference>
<dbReference type="Pfam" id="PF08018">
    <property type="entry name" value="Antimicrobial_1"/>
    <property type="match status" value="1"/>
</dbReference>
<dbReference type="Pfam" id="PF03032">
    <property type="entry name" value="FSAP_sig_propep"/>
    <property type="match status" value="1"/>
</dbReference>
<protein>
    <recommendedName>
        <fullName evidence="4">Brevinin-1CG5</fullName>
    </recommendedName>
</protein>
<name>BR15_AMOCU</name>
<proteinExistence type="inferred from homology"/>
<keyword id="KW-0878">Amphibian defense peptide</keyword>
<keyword id="KW-0044">Antibiotic</keyword>
<keyword id="KW-0929">Antimicrobial</keyword>
<keyword id="KW-0165">Cleavage on pair of basic residues</keyword>
<keyword id="KW-0204">Cytolysis</keyword>
<keyword id="KW-1015">Disulfide bond</keyword>
<keyword id="KW-0295">Fungicide</keyword>
<keyword id="KW-0354">Hemolysis</keyword>
<keyword id="KW-0964">Secreted</keyword>
<keyword id="KW-0732">Signal</keyword>
<evidence type="ECO:0000250" key="1">
    <source>
        <dbReference type="UniProtKB" id="P80398"/>
    </source>
</evidence>
<evidence type="ECO:0000255" key="2"/>
<evidence type="ECO:0000269" key="3">
    <source>
    </source>
</evidence>
<evidence type="ECO:0000303" key="4">
    <source>
    </source>
</evidence>
<evidence type="ECO:0000305" key="5">
    <source>
    </source>
</evidence>
<evidence type="ECO:0000312" key="6">
    <source>
        <dbReference type="EMBL" id="ADM34261.1"/>
    </source>
</evidence>
<sequence>MFTLKKSLLLLFFLGTINLSLCEQERNAEEERRDDDEMDVEVEKRFLPMLAGLAANFLPKIVCKITKKC</sequence>
<reference evidence="6" key="1">
    <citation type="journal article" date="2012" name="Peptides">
        <title>Characterization of diverse antimicrobial peptides in skin secretions of Chungan torrent frog Amolops chunganensis.</title>
        <authorList>
            <person name="Yang X."/>
            <person name="Xia J."/>
            <person name="Yu Z."/>
            <person name="Hu Y."/>
            <person name="Li F."/>
            <person name="Meng H."/>
            <person name="Yang S."/>
            <person name="Liu J."/>
            <person name="Wang H."/>
        </authorList>
    </citation>
    <scope>NUCLEOTIDE SEQUENCE [MRNA]</scope>
    <scope>FUNCTION</scope>
    <scope>SYNTHESIS</scope>
</reference>
<comment type="function">
    <text evidence="3">Antimicrobial peptide active against a variety of Gram-positive and Gram-negative bacterial strains. Has antifungal activity against C.albicans ATCC 10231 and a slime mold isolate. Has hemolytic activity against human erythrocytes.</text>
</comment>
<comment type="subcellular location">
    <subcellularLocation>
        <location evidence="5">Secreted</location>
    </subcellularLocation>
</comment>
<comment type="tissue specificity">
    <text evidence="5">Expressed by the skin glands.</text>
</comment>
<comment type="similarity">
    <text evidence="2">Belongs to the frog skin active peptide (FSAP) family. Brevinin subfamily.</text>
</comment>